<name>F16PA_LEPBJ</name>
<sequence length="342" mass="37443">MSVHPTQTLSLSQYLIEEQLKLPQATGDFTALMSHLVYAAKIVSREVRKAGLLENVLGSNETVNVQGETQMKLDEYADKVFNHTLTRSGHLCILGSEEHEETVSVPSGYKIGKYTIAIDPLDGSSNIDANVSIGTIFSVHLRKSPADTPGTLSDLLQKGSGQRAAGYVLYGSSTMLVLCTGKGVSGFTLDPSCGEFILSHPDMQMPETGGIYSINEGNYNYWSDEVKNYIRDIKSIEGGKKPQSGRYIGSLVADFHRNLLKGGIFLYPNDTKSTKYPNGKLRLLYEAAPMAFIAEQAGGMAVTVYGERILDLTPKELHERTTLVVGSKKEVEHFLKFAPKKP</sequence>
<accession>Q04T19</accession>
<evidence type="ECO:0000255" key="1">
    <source>
        <dbReference type="HAMAP-Rule" id="MF_01855"/>
    </source>
</evidence>
<keyword id="KW-0119">Carbohydrate metabolism</keyword>
<keyword id="KW-0963">Cytoplasm</keyword>
<keyword id="KW-0378">Hydrolase</keyword>
<keyword id="KW-0460">Magnesium</keyword>
<keyword id="KW-0479">Metal-binding</keyword>
<organism>
    <name type="scientific">Leptospira borgpetersenii serovar Hardjo-bovis (strain JB197)</name>
    <dbReference type="NCBI Taxonomy" id="355277"/>
    <lineage>
        <taxon>Bacteria</taxon>
        <taxon>Pseudomonadati</taxon>
        <taxon>Spirochaetota</taxon>
        <taxon>Spirochaetia</taxon>
        <taxon>Leptospirales</taxon>
        <taxon>Leptospiraceae</taxon>
        <taxon>Leptospira</taxon>
    </lineage>
</organism>
<proteinExistence type="inferred from homology"/>
<comment type="catalytic activity">
    <reaction evidence="1">
        <text>beta-D-fructose 1,6-bisphosphate + H2O = beta-D-fructose 6-phosphate + phosphate</text>
        <dbReference type="Rhea" id="RHEA:11064"/>
        <dbReference type="ChEBI" id="CHEBI:15377"/>
        <dbReference type="ChEBI" id="CHEBI:32966"/>
        <dbReference type="ChEBI" id="CHEBI:43474"/>
        <dbReference type="ChEBI" id="CHEBI:57634"/>
        <dbReference type="EC" id="3.1.3.11"/>
    </reaction>
</comment>
<comment type="cofactor">
    <cofactor evidence="1">
        <name>Mg(2+)</name>
        <dbReference type="ChEBI" id="CHEBI:18420"/>
    </cofactor>
    <text evidence="1">Binds 2 magnesium ions per subunit.</text>
</comment>
<comment type="pathway">
    <text evidence="1">Carbohydrate biosynthesis; gluconeogenesis.</text>
</comment>
<comment type="subunit">
    <text evidence="1">Homotetramer.</text>
</comment>
<comment type="subcellular location">
    <subcellularLocation>
        <location evidence="1">Cytoplasm</location>
    </subcellularLocation>
</comment>
<comment type="similarity">
    <text evidence="1">Belongs to the FBPase class 1 family.</text>
</comment>
<reference key="1">
    <citation type="journal article" date="2006" name="Proc. Natl. Acad. Sci. U.S.A.">
        <title>Genome reduction in Leptospira borgpetersenii reflects limited transmission potential.</title>
        <authorList>
            <person name="Bulach D.M."/>
            <person name="Zuerner R.L."/>
            <person name="Wilson P."/>
            <person name="Seemann T."/>
            <person name="McGrath A."/>
            <person name="Cullen P.A."/>
            <person name="Davis J."/>
            <person name="Johnson M."/>
            <person name="Kuczek E."/>
            <person name="Alt D.P."/>
            <person name="Peterson-Burch B."/>
            <person name="Coppel R.L."/>
            <person name="Rood J.I."/>
            <person name="Davies J.K."/>
            <person name="Adler B."/>
        </authorList>
    </citation>
    <scope>NUCLEOTIDE SEQUENCE [LARGE SCALE GENOMIC DNA]</scope>
    <source>
        <strain>JB197</strain>
    </source>
</reference>
<dbReference type="EC" id="3.1.3.11" evidence="1"/>
<dbReference type="EMBL" id="CP000350">
    <property type="protein sequence ID" value="ABJ75951.1"/>
    <property type="molecule type" value="Genomic_DNA"/>
</dbReference>
<dbReference type="RefSeq" id="WP_011670221.1">
    <property type="nucleotide sequence ID" value="NC_008510.1"/>
</dbReference>
<dbReference type="SMR" id="Q04T19"/>
<dbReference type="KEGG" id="lbj:LBJ_1370"/>
<dbReference type="HOGENOM" id="CLU_039977_2_2_12"/>
<dbReference type="UniPathway" id="UPA00138"/>
<dbReference type="Proteomes" id="UP000000656">
    <property type="component" value="Chromosome 1"/>
</dbReference>
<dbReference type="GO" id="GO:0005829">
    <property type="term" value="C:cytosol"/>
    <property type="evidence" value="ECO:0007669"/>
    <property type="project" value="TreeGrafter"/>
</dbReference>
<dbReference type="GO" id="GO:0042132">
    <property type="term" value="F:fructose 1,6-bisphosphate 1-phosphatase activity"/>
    <property type="evidence" value="ECO:0007669"/>
    <property type="project" value="UniProtKB-UniRule"/>
</dbReference>
<dbReference type="GO" id="GO:0000287">
    <property type="term" value="F:magnesium ion binding"/>
    <property type="evidence" value="ECO:0007669"/>
    <property type="project" value="UniProtKB-UniRule"/>
</dbReference>
<dbReference type="GO" id="GO:0030388">
    <property type="term" value="P:fructose 1,6-bisphosphate metabolic process"/>
    <property type="evidence" value="ECO:0007669"/>
    <property type="project" value="TreeGrafter"/>
</dbReference>
<dbReference type="GO" id="GO:0006002">
    <property type="term" value="P:fructose 6-phosphate metabolic process"/>
    <property type="evidence" value="ECO:0007669"/>
    <property type="project" value="TreeGrafter"/>
</dbReference>
<dbReference type="GO" id="GO:0006000">
    <property type="term" value="P:fructose metabolic process"/>
    <property type="evidence" value="ECO:0007669"/>
    <property type="project" value="TreeGrafter"/>
</dbReference>
<dbReference type="GO" id="GO:0006094">
    <property type="term" value="P:gluconeogenesis"/>
    <property type="evidence" value="ECO:0007669"/>
    <property type="project" value="UniProtKB-UniRule"/>
</dbReference>
<dbReference type="GO" id="GO:0005986">
    <property type="term" value="P:sucrose biosynthetic process"/>
    <property type="evidence" value="ECO:0007669"/>
    <property type="project" value="TreeGrafter"/>
</dbReference>
<dbReference type="CDD" id="cd00354">
    <property type="entry name" value="FBPase"/>
    <property type="match status" value="1"/>
</dbReference>
<dbReference type="FunFam" id="3.30.540.10:FF:000002">
    <property type="entry name" value="Fructose-1,6-bisphosphatase class 1"/>
    <property type="match status" value="1"/>
</dbReference>
<dbReference type="FunFam" id="3.40.190.80:FF:000001">
    <property type="entry name" value="Fructose-1,6-bisphosphatase class 1"/>
    <property type="match status" value="1"/>
</dbReference>
<dbReference type="Gene3D" id="3.40.190.80">
    <property type="match status" value="1"/>
</dbReference>
<dbReference type="Gene3D" id="3.30.540.10">
    <property type="entry name" value="Fructose-1,6-Bisphosphatase, subunit A, domain 1"/>
    <property type="match status" value="1"/>
</dbReference>
<dbReference type="HAMAP" id="MF_01855">
    <property type="entry name" value="FBPase_class1"/>
    <property type="match status" value="1"/>
</dbReference>
<dbReference type="InterPro" id="IPR044015">
    <property type="entry name" value="FBPase_C_dom"/>
</dbReference>
<dbReference type="InterPro" id="IPR000146">
    <property type="entry name" value="FBPase_class-1"/>
</dbReference>
<dbReference type="InterPro" id="IPR033391">
    <property type="entry name" value="FBPase_N"/>
</dbReference>
<dbReference type="InterPro" id="IPR028343">
    <property type="entry name" value="FBPtase"/>
</dbReference>
<dbReference type="InterPro" id="IPR020548">
    <property type="entry name" value="Fructose_bisphosphatase_AS"/>
</dbReference>
<dbReference type="NCBIfam" id="NF006778">
    <property type="entry name" value="PRK09293.1-1"/>
    <property type="match status" value="1"/>
</dbReference>
<dbReference type="PANTHER" id="PTHR11556">
    <property type="entry name" value="FRUCTOSE-1,6-BISPHOSPHATASE-RELATED"/>
    <property type="match status" value="1"/>
</dbReference>
<dbReference type="PANTHER" id="PTHR11556:SF35">
    <property type="entry name" value="SEDOHEPTULOSE-1,7-BISPHOSPHATASE, CHLOROPLASTIC"/>
    <property type="match status" value="1"/>
</dbReference>
<dbReference type="Pfam" id="PF00316">
    <property type="entry name" value="FBPase"/>
    <property type="match status" value="1"/>
</dbReference>
<dbReference type="Pfam" id="PF18913">
    <property type="entry name" value="FBPase_C"/>
    <property type="match status" value="1"/>
</dbReference>
<dbReference type="PIRSF" id="PIRSF500210">
    <property type="entry name" value="FBPtase"/>
    <property type="match status" value="1"/>
</dbReference>
<dbReference type="PIRSF" id="PIRSF000904">
    <property type="entry name" value="FBPtase_SBPase"/>
    <property type="match status" value="1"/>
</dbReference>
<dbReference type="PRINTS" id="PR00115">
    <property type="entry name" value="F16BPHPHTASE"/>
</dbReference>
<dbReference type="SUPFAM" id="SSF56655">
    <property type="entry name" value="Carbohydrate phosphatase"/>
    <property type="match status" value="1"/>
</dbReference>
<dbReference type="PROSITE" id="PS00124">
    <property type="entry name" value="FBPASE"/>
    <property type="match status" value="1"/>
</dbReference>
<protein>
    <recommendedName>
        <fullName evidence="1">Fructose-1,6-bisphosphatase class 1</fullName>
        <shortName evidence="1">FBPase class 1</shortName>
        <ecNumber evidence="1">3.1.3.11</ecNumber>
    </recommendedName>
    <alternativeName>
        <fullName evidence="1">D-fructose-1,6-bisphosphate 1-phosphohydrolase class 1</fullName>
    </alternativeName>
</protein>
<feature type="chain" id="PRO_0000364586" description="Fructose-1,6-bisphosphatase class 1">
    <location>
        <begin position="1"/>
        <end position="342"/>
    </location>
</feature>
<feature type="binding site" evidence="1">
    <location>
        <position position="97"/>
    </location>
    <ligand>
        <name>Mg(2+)</name>
        <dbReference type="ChEBI" id="CHEBI:18420"/>
        <label>1</label>
    </ligand>
</feature>
<feature type="binding site" evidence="1">
    <location>
        <position position="119"/>
    </location>
    <ligand>
        <name>Mg(2+)</name>
        <dbReference type="ChEBI" id="CHEBI:18420"/>
        <label>1</label>
    </ligand>
</feature>
<feature type="binding site" evidence="1">
    <location>
        <position position="119"/>
    </location>
    <ligand>
        <name>Mg(2+)</name>
        <dbReference type="ChEBI" id="CHEBI:18420"/>
        <label>2</label>
    </ligand>
</feature>
<feature type="binding site" evidence="1">
    <location>
        <position position="121"/>
    </location>
    <ligand>
        <name>Mg(2+)</name>
        <dbReference type="ChEBI" id="CHEBI:18420"/>
        <label>1</label>
    </ligand>
</feature>
<feature type="binding site" evidence="1">
    <location>
        <begin position="122"/>
        <end position="125"/>
    </location>
    <ligand>
        <name>substrate</name>
    </ligand>
</feature>
<feature type="binding site" evidence="1">
    <location>
        <position position="122"/>
    </location>
    <ligand>
        <name>Mg(2+)</name>
        <dbReference type="ChEBI" id="CHEBI:18420"/>
        <label>2</label>
    </ligand>
</feature>
<feature type="binding site" evidence="1">
    <location>
        <position position="215"/>
    </location>
    <ligand>
        <name>substrate</name>
    </ligand>
</feature>
<feature type="binding site" evidence="1">
    <location>
        <position position="247"/>
    </location>
    <ligand>
        <name>substrate</name>
    </ligand>
</feature>
<feature type="binding site" evidence="1">
    <location>
        <position position="280"/>
    </location>
    <ligand>
        <name>substrate</name>
    </ligand>
</feature>
<feature type="binding site" evidence="1">
    <location>
        <position position="286"/>
    </location>
    <ligand>
        <name>Mg(2+)</name>
        <dbReference type="ChEBI" id="CHEBI:18420"/>
        <label>2</label>
    </ligand>
</feature>
<gene>
    <name evidence="1" type="primary">fbp</name>
    <name type="ordered locus">LBJ_1370</name>
</gene>